<proteinExistence type="inferred from homology"/>
<accession>Q92IC3</accession>
<feature type="chain" id="PRO_0000279758" description="Putative N-acetylmuramoyl-L-alanine amidase RC0497">
    <location>
        <begin position="1"/>
        <end position="267"/>
    </location>
</feature>
<feature type="domain" description="N-acetylmuramoyl-L-alanine amidase" evidence="1">
    <location>
        <begin position="33"/>
        <end position="141"/>
    </location>
</feature>
<feature type="region of interest" description="Disordered" evidence="2">
    <location>
        <begin position="1"/>
        <end position="25"/>
    </location>
</feature>
<feature type="compositionally biased region" description="Polar residues" evidence="2">
    <location>
        <begin position="10"/>
        <end position="19"/>
    </location>
</feature>
<gene>
    <name type="ordered locus">RC0497</name>
</gene>
<dbReference type="EC" id="3.5.1.28"/>
<dbReference type="EMBL" id="AE006914">
    <property type="protein sequence ID" value="AAL03035.1"/>
    <property type="molecule type" value="Genomic_DNA"/>
</dbReference>
<dbReference type="PIR" id="A97762">
    <property type="entry name" value="A97762"/>
</dbReference>
<dbReference type="RefSeq" id="WP_004995964.1">
    <property type="nucleotide sequence ID" value="NC_003103.1"/>
</dbReference>
<dbReference type="SMR" id="Q92IC3"/>
<dbReference type="KEGG" id="rco:RC0497"/>
<dbReference type="HOGENOM" id="CLU_092794_0_0_5"/>
<dbReference type="BRENDA" id="3.5.1.28">
    <property type="organism ID" value="5446"/>
</dbReference>
<dbReference type="Proteomes" id="UP000000816">
    <property type="component" value="Chromosome"/>
</dbReference>
<dbReference type="GO" id="GO:0005576">
    <property type="term" value="C:extracellular region"/>
    <property type="evidence" value="ECO:0007669"/>
    <property type="project" value="UniProtKB-SubCell"/>
</dbReference>
<dbReference type="GO" id="GO:0019867">
    <property type="term" value="C:outer membrane"/>
    <property type="evidence" value="ECO:0007669"/>
    <property type="project" value="TreeGrafter"/>
</dbReference>
<dbReference type="GO" id="GO:0008745">
    <property type="term" value="F:N-acetylmuramoyl-L-alanine amidase activity"/>
    <property type="evidence" value="ECO:0007669"/>
    <property type="project" value="UniProtKB-EC"/>
</dbReference>
<dbReference type="GO" id="GO:0071555">
    <property type="term" value="P:cell wall organization"/>
    <property type="evidence" value="ECO:0007669"/>
    <property type="project" value="UniProtKB-KW"/>
</dbReference>
<dbReference type="GO" id="GO:0009253">
    <property type="term" value="P:peptidoglycan catabolic process"/>
    <property type="evidence" value="ECO:0007669"/>
    <property type="project" value="InterPro"/>
</dbReference>
<dbReference type="GO" id="GO:0009254">
    <property type="term" value="P:peptidoglycan turnover"/>
    <property type="evidence" value="ECO:0007669"/>
    <property type="project" value="TreeGrafter"/>
</dbReference>
<dbReference type="CDD" id="cd06583">
    <property type="entry name" value="PGRP"/>
    <property type="match status" value="1"/>
</dbReference>
<dbReference type="Gene3D" id="3.40.80.10">
    <property type="entry name" value="Peptidoglycan recognition protein-like"/>
    <property type="match status" value="1"/>
</dbReference>
<dbReference type="Gene3D" id="1.10.101.10">
    <property type="entry name" value="PGBD-like superfamily/PGBD"/>
    <property type="match status" value="1"/>
</dbReference>
<dbReference type="InterPro" id="IPR036505">
    <property type="entry name" value="Amidase/PGRP_sf"/>
</dbReference>
<dbReference type="InterPro" id="IPR002502">
    <property type="entry name" value="Amidase_domain"/>
</dbReference>
<dbReference type="InterPro" id="IPR051206">
    <property type="entry name" value="NAMLAA_amidase_2"/>
</dbReference>
<dbReference type="InterPro" id="IPR002477">
    <property type="entry name" value="Peptidoglycan-bd-like"/>
</dbReference>
<dbReference type="InterPro" id="IPR036365">
    <property type="entry name" value="PGBD-like_sf"/>
</dbReference>
<dbReference type="InterPro" id="IPR036366">
    <property type="entry name" value="PGBDSf"/>
</dbReference>
<dbReference type="PANTHER" id="PTHR30417">
    <property type="entry name" value="N-ACETYLMURAMOYL-L-ALANINE AMIDASE AMID"/>
    <property type="match status" value="1"/>
</dbReference>
<dbReference type="PANTHER" id="PTHR30417:SF1">
    <property type="entry name" value="N-ACETYLMURAMOYL-L-ALANINE AMIDASE AMID"/>
    <property type="match status" value="1"/>
</dbReference>
<dbReference type="Pfam" id="PF01510">
    <property type="entry name" value="Amidase_2"/>
    <property type="match status" value="1"/>
</dbReference>
<dbReference type="Pfam" id="PF01471">
    <property type="entry name" value="PG_binding_1"/>
    <property type="match status" value="1"/>
</dbReference>
<dbReference type="SUPFAM" id="SSF55846">
    <property type="entry name" value="N-acetylmuramoyl-L-alanine amidase-like"/>
    <property type="match status" value="1"/>
</dbReference>
<dbReference type="SUPFAM" id="SSF47090">
    <property type="entry name" value="PGBD-like"/>
    <property type="match status" value="1"/>
</dbReference>
<evidence type="ECO:0000255" key="1"/>
<evidence type="ECO:0000256" key="2">
    <source>
        <dbReference type="SAM" id="MobiDB-lite"/>
    </source>
</evidence>
<evidence type="ECO:0000305" key="3"/>
<reference key="1">
    <citation type="journal article" date="2001" name="Science">
        <title>Mechanisms of evolution in Rickettsia conorii and R. prowazekii.</title>
        <authorList>
            <person name="Ogata H."/>
            <person name="Audic S."/>
            <person name="Renesto-Audiffren P."/>
            <person name="Fournier P.-E."/>
            <person name="Barbe V."/>
            <person name="Samson D."/>
            <person name="Roux V."/>
            <person name="Cossart P."/>
            <person name="Weissenbach J."/>
            <person name="Claverie J.-M."/>
            <person name="Raoult D."/>
        </authorList>
    </citation>
    <scope>NUCLEOTIDE SEQUENCE [LARGE SCALE GENOMIC DNA]</scope>
    <source>
        <strain>ATCC VR-613 / Malish 7</strain>
    </source>
</reference>
<name>Y497_RICCN</name>
<protein>
    <recommendedName>
        <fullName>Putative N-acetylmuramoyl-L-alanine amidase RC0497</fullName>
        <ecNumber>3.5.1.28</ecNumber>
    </recommendedName>
</protein>
<organism>
    <name type="scientific">Rickettsia conorii (strain ATCC VR-613 / Malish 7)</name>
    <dbReference type="NCBI Taxonomy" id="272944"/>
    <lineage>
        <taxon>Bacteria</taxon>
        <taxon>Pseudomonadati</taxon>
        <taxon>Pseudomonadota</taxon>
        <taxon>Alphaproteobacteria</taxon>
        <taxon>Rickettsiales</taxon>
        <taxon>Rickettsiaceae</taxon>
        <taxon>Rickettsieae</taxon>
        <taxon>Rickettsia</taxon>
        <taxon>spotted fever group</taxon>
    </lineage>
</organism>
<sequence length="267" mass="29592">MSKSKAIENNGISNTNSPNGKYMAPRPEGVKPTCVVITYSVSKDIKAVREVLDERGASVHYIIDKDGTQKEYHNDLTDQAFYAGKSSWKGEVGVNKFGIGVMLINDAKSDFPAEQIGKLKEFLKDVTERYPNLDLKHDLVGLGEVTVNREGNAHIAPGSKFPWKELAEAGFGRYFETTQEQKSKLLLSLDSTGEKVNTLQENLKEYGYGVESTSTFDQFTQQAVRVFNDRYGTGLPNEEPPVSWTEAGQDVLSQLLGQTVLEQTENA</sequence>
<comment type="catalytic activity">
    <reaction>
        <text>Hydrolyzes the link between N-acetylmuramoyl residues and L-amino acid residues in certain cell-wall glycopeptides.</text>
        <dbReference type="EC" id="3.5.1.28"/>
    </reaction>
</comment>
<comment type="subcellular location">
    <subcellularLocation>
        <location evidence="3">Secreted</location>
    </subcellularLocation>
</comment>
<comment type="similarity">
    <text evidence="3">Belongs to the N-acetylmuramoyl-L-alanine amidase 2 family.</text>
</comment>
<keyword id="KW-0961">Cell wall biogenesis/degradation</keyword>
<keyword id="KW-0378">Hydrolase</keyword>
<keyword id="KW-0964">Secreted</keyword>